<sequence length="426" mass="46903">MARIGDGGDLLKCSFCGKSQKQVKKLIAGPGVYICDECIDLCNEIIEEELADADDVKLDELPKPIEIREFLEGYVIGQDTAKRTLAVAVYNHYKRIQAGEKGRDSRHEPVELTKSNILMLGPTGCGKTYLAQTLAKMLNVPFAIADATALTEAGYVGEDVENILLKLIQAADYDVKRAETGIIYIDEVDKIARKSENPSITRDVSGEGVQQALLKILEGTQASVPPQGGRKHPHQEFIQIDTTNVLFIVAGAFAGLEKIIYERVGKRGLGFGAEVRSKAEIDTTDHFAEVMPEDLIKFGLIPEFIGRLPVVASVTNLDRESLVKILSEPKNALVKQYTRLFEMDGVELEFTDDALEAIADQAIHRGTGARGLRAIMEEVLLPVMYDIPSRDDVAKVVVTKETVQDNVLPTIVPRKPSRTERRDKSA</sequence>
<feature type="chain" id="PRO_1000024586" description="ATP-dependent Clp protease ATP-binding subunit ClpX">
    <location>
        <begin position="1"/>
        <end position="426"/>
    </location>
</feature>
<feature type="domain" description="ClpX-type ZB" evidence="2">
    <location>
        <begin position="1"/>
        <end position="54"/>
    </location>
</feature>
<feature type="binding site" evidence="2">
    <location>
        <position position="13"/>
    </location>
    <ligand>
        <name>Zn(2+)</name>
        <dbReference type="ChEBI" id="CHEBI:29105"/>
    </ligand>
</feature>
<feature type="binding site" evidence="2">
    <location>
        <position position="16"/>
    </location>
    <ligand>
        <name>Zn(2+)</name>
        <dbReference type="ChEBI" id="CHEBI:29105"/>
    </ligand>
</feature>
<feature type="binding site" evidence="2">
    <location>
        <position position="35"/>
    </location>
    <ligand>
        <name>Zn(2+)</name>
        <dbReference type="ChEBI" id="CHEBI:29105"/>
    </ligand>
</feature>
<feature type="binding site" evidence="2">
    <location>
        <position position="38"/>
    </location>
    <ligand>
        <name>Zn(2+)</name>
        <dbReference type="ChEBI" id="CHEBI:29105"/>
    </ligand>
</feature>
<feature type="binding site" evidence="1">
    <location>
        <begin position="122"/>
        <end position="129"/>
    </location>
    <ligand>
        <name>ATP</name>
        <dbReference type="ChEBI" id="CHEBI:30616"/>
    </ligand>
</feature>
<accession>A0QDF5</accession>
<organism>
    <name type="scientific">Mycobacterium avium (strain 104)</name>
    <dbReference type="NCBI Taxonomy" id="243243"/>
    <lineage>
        <taxon>Bacteria</taxon>
        <taxon>Bacillati</taxon>
        <taxon>Actinomycetota</taxon>
        <taxon>Actinomycetes</taxon>
        <taxon>Mycobacteriales</taxon>
        <taxon>Mycobacteriaceae</taxon>
        <taxon>Mycobacterium</taxon>
        <taxon>Mycobacterium avium complex (MAC)</taxon>
    </lineage>
</organism>
<protein>
    <recommendedName>
        <fullName evidence="1">ATP-dependent Clp protease ATP-binding subunit ClpX</fullName>
    </recommendedName>
</protein>
<reference key="1">
    <citation type="submission" date="2006-10" db="EMBL/GenBank/DDBJ databases">
        <authorList>
            <person name="Fleischmann R.D."/>
            <person name="Dodson R.J."/>
            <person name="Haft D.H."/>
            <person name="Merkel J.S."/>
            <person name="Nelson W.C."/>
            <person name="Fraser C.M."/>
        </authorList>
    </citation>
    <scope>NUCLEOTIDE SEQUENCE [LARGE SCALE GENOMIC DNA]</scope>
    <source>
        <strain>104</strain>
    </source>
</reference>
<keyword id="KW-0067">ATP-binding</keyword>
<keyword id="KW-0143">Chaperone</keyword>
<keyword id="KW-0479">Metal-binding</keyword>
<keyword id="KW-0547">Nucleotide-binding</keyword>
<keyword id="KW-0862">Zinc</keyword>
<evidence type="ECO:0000255" key="1">
    <source>
        <dbReference type="HAMAP-Rule" id="MF_00175"/>
    </source>
</evidence>
<evidence type="ECO:0000255" key="2">
    <source>
        <dbReference type="PROSITE-ProRule" id="PRU01250"/>
    </source>
</evidence>
<comment type="function">
    <text evidence="1">ATP-dependent specificity component of the Clp protease. It directs the protease to specific substrates. Can perform chaperone functions in the absence of ClpP.</text>
</comment>
<comment type="subunit">
    <text evidence="1">Component of the ClpX-ClpP complex. Forms a hexameric ring that, in the presence of ATP, binds to fourteen ClpP subunits assembled into a disk-like structure with a central cavity, resembling the structure of eukaryotic proteasomes.</text>
</comment>
<comment type="similarity">
    <text evidence="1">Belongs to the ClpX chaperone family.</text>
</comment>
<dbReference type="EMBL" id="CP000479">
    <property type="protein sequence ID" value="ABK68738.1"/>
    <property type="molecule type" value="Genomic_DNA"/>
</dbReference>
<dbReference type="RefSeq" id="WP_003875851.1">
    <property type="nucleotide sequence ID" value="NC_008595.1"/>
</dbReference>
<dbReference type="SMR" id="A0QDF5"/>
<dbReference type="GeneID" id="75269492"/>
<dbReference type="KEGG" id="mav:MAV_1716"/>
<dbReference type="HOGENOM" id="CLU_014218_8_2_11"/>
<dbReference type="Proteomes" id="UP000001574">
    <property type="component" value="Chromosome"/>
</dbReference>
<dbReference type="GO" id="GO:0009376">
    <property type="term" value="C:HslUV protease complex"/>
    <property type="evidence" value="ECO:0007669"/>
    <property type="project" value="TreeGrafter"/>
</dbReference>
<dbReference type="GO" id="GO:0005524">
    <property type="term" value="F:ATP binding"/>
    <property type="evidence" value="ECO:0007669"/>
    <property type="project" value="UniProtKB-UniRule"/>
</dbReference>
<dbReference type="GO" id="GO:0016887">
    <property type="term" value="F:ATP hydrolysis activity"/>
    <property type="evidence" value="ECO:0007669"/>
    <property type="project" value="InterPro"/>
</dbReference>
<dbReference type="GO" id="GO:0140662">
    <property type="term" value="F:ATP-dependent protein folding chaperone"/>
    <property type="evidence" value="ECO:0007669"/>
    <property type="project" value="InterPro"/>
</dbReference>
<dbReference type="GO" id="GO:0046983">
    <property type="term" value="F:protein dimerization activity"/>
    <property type="evidence" value="ECO:0007669"/>
    <property type="project" value="InterPro"/>
</dbReference>
<dbReference type="GO" id="GO:0051082">
    <property type="term" value="F:unfolded protein binding"/>
    <property type="evidence" value="ECO:0007669"/>
    <property type="project" value="UniProtKB-UniRule"/>
</dbReference>
<dbReference type="GO" id="GO:0008270">
    <property type="term" value="F:zinc ion binding"/>
    <property type="evidence" value="ECO:0007669"/>
    <property type="project" value="InterPro"/>
</dbReference>
<dbReference type="GO" id="GO:0051301">
    <property type="term" value="P:cell division"/>
    <property type="evidence" value="ECO:0007669"/>
    <property type="project" value="TreeGrafter"/>
</dbReference>
<dbReference type="GO" id="GO:0051603">
    <property type="term" value="P:proteolysis involved in protein catabolic process"/>
    <property type="evidence" value="ECO:0007669"/>
    <property type="project" value="TreeGrafter"/>
</dbReference>
<dbReference type="CDD" id="cd19497">
    <property type="entry name" value="RecA-like_ClpX"/>
    <property type="match status" value="1"/>
</dbReference>
<dbReference type="FunFam" id="1.10.8.60:FF:000002">
    <property type="entry name" value="ATP-dependent Clp protease ATP-binding subunit ClpX"/>
    <property type="match status" value="1"/>
</dbReference>
<dbReference type="FunFam" id="3.40.50.300:FF:000005">
    <property type="entry name" value="ATP-dependent Clp protease ATP-binding subunit ClpX"/>
    <property type="match status" value="1"/>
</dbReference>
<dbReference type="Gene3D" id="1.10.8.60">
    <property type="match status" value="1"/>
</dbReference>
<dbReference type="Gene3D" id="6.20.220.10">
    <property type="entry name" value="ClpX chaperone, C4-type zinc finger domain"/>
    <property type="match status" value="1"/>
</dbReference>
<dbReference type="Gene3D" id="3.40.50.300">
    <property type="entry name" value="P-loop containing nucleotide triphosphate hydrolases"/>
    <property type="match status" value="1"/>
</dbReference>
<dbReference type="HAMAP" id="MF_00175">
    <property type="entry name" value="ClpX"/>
    <property type="match status" value="1"/>
</dbReference>
<dbReference type="InterPro" id="IPR003593">
    <property type="entry name" value="AAA+_ATPase"/>
</dbReference>
<dbReference type="InterPro" id="IPR050052">
    <property type="entry name" value="ATP-dep_Clp_protease_ClpX"/>
</dbReference>
<dbReference type="InterPro" id="IPR003959">
    <property type="entry name" value="ATPase_AAA_core"/>
</dbReference>
<dbReference type="InterPro" id="IPR019489">
    <property type="entry name" value="Clp_ATPase_C"/>
</dbReference>
<dbReference type="InterPro" id="IPR004487">
    <property type="entry name" value="Clp_protease_ATP-bd_su_ClpX"/>
</dbReference>
<dbReference type="InterPro" id="IPR046425">
    <property type="entry name" value="ClpX_bact"/>
</dbReference>
<dbReference type="InterPro" id="IPR027417">
    <property type="entry name" value="P-loop_NTPase"/>
</dbReference>
<dbReference type="InterPro" id="IPR010603">
    <property type="entry name" value="Znf_CppX_C4"/>
</dbReference>
<dbReference type="InterPro" id="IPR038366">
    <property type="entry name" value="Znf_CppX_C4_sf"/>
</dbReference>
<dbReference type="NCBIfam" id="TIGR00382">
    <property type="entry name" value="clpX"/>
    <property type="match status" value="1"/>
</dbReference>
<dbReference type="NCBIfam" id="NF003745">
    <property type="entry name" value="PRK05342.1"/>
    <property type="match status" value="1"/>
</dbReference>
<dbReference type="PANTHER" id="PTHR48102:SF7">
    <property type="entry name" value="ATP-DEPENDENT CLP PROTEASE ATP-BINDING SUBUNIT CLPX-LIKE, MITOCHONDRIAL"/>
    <property type="match status" value="1"/>
</dbReference>
<dbReference type="PANTHER" id="PTHR48102">
    <property type="entry name" value="ATP-DEPENDENT CLP PROTEASE ATP-BINDING SUBUNIT CLPX-LIKE, MITOCHONDRIAL-RELATED"/>
    <property type="match status" value="1"/>
</dbReference>
<dbReference type="Pfam" id="PF07724">
    <property type="entry name" value="AAA_2"/>
    <property type="match status" value="1"/>
</dbReference>
<dbReference type="Pfam" id="PF10431">
    <property type="entry name" value="ClpB_D2-small"/>
    <property type="match status" value="1"/>
</dbReference>
<dbReference type="Pfam" id="PF06689">
    <property type="entry name" value="zf-C4_ClpX"/>
    <property type="match status" value="1"/>
</dbReference>
<dbReference type="SMART" id="SM00382">
    <property type="entry name" value="AAA"/>
    <property type="match status" value="1"/>
</dbReference>
<dbReference type="SMART" id="SM01086">
    <property type="entry name" value="ClpB_D2-small"/>
    <property type="match status" value="1"/>
</dbReference>
<dbReference type="SMART" id="SM00994">
    <property type="entry name" value="zf-C4_ClpX"/>
    <property type="match status" value="1"/>
</dbReference>
<dbReference type="SUPFAM" id="SSF57716">
    <property type="entry name" value="Glucocorticoid receptor-like (DNA-binding domain)"/>
    <property type="match status" value="1"/>
</dbReference>
<dbReference type="SUPFAM" id="SSF52540">
    <property type="entry name" value="P-loop containing nucleoside triphosphate hydrolases"/>
    <property type="match status" value="1"/>
</dbReference>
<dbReference type="PROSITE" id="PS51902">
    <property type="entry name" value="CLPX_ZB"/>
    <property type="match status" value="1"/>
</dbReference>
<proteinExistence type="inferred from homology"/>
<gene>
    <name evidence="1" type="primary">clpX</name>
    <name type="ordered locus">MAV_1716</name>
</gene>
<name>CLPX_MYCA1</name>